<comment type="catalytic activity">
    <reaction>
        <text>L-asparagine + H2O = L-aspartate + NH4(+)</text>
        <dbReference type="Rhea" id="RHEA:21016"/>
        <dbReference type="ChEBI" id="CHEBI:15377"/>
        <dbReference type="ChEBI" id="CHEBI:28938"/>
        <dbReference type="ChEBI" id="CHEBI:29991"/>
        <dbReference type="ChEBI" id="CHEBI:58048"/>
        <dbReference type="EC" id="3.5.1.1"/>
    </reaction>
</comment>
<comment type="subcellular location">
    <subcellularLocation>
        <location evidence="1">Secreted</location>
        <location evidence="1">Cell wall</location>
    </subcellularLocation>
</comment>
<comment type="similarity">
    <text evidence="4">Belongs to the asparaginase 1 family.</text>
</comment>
<proteinExistence type="inferred from homology"/>
<reference key="1">
    <citation type="journal article" date="2002" name="Nature">
        <title>The genome sequence of Schizosaccharomyces pombe.</title>
        <authorList>
            <person name="Wood V."/>
            <person name="Gwilliam R."/>
            <person name="Rajandream M.A."/>
            <person name="Lyne M.H."/>
            <person name="Lyne R."/>
            <person name="Stewart A."/>
            <person name="Sgouros J.G."/>
            <person name="Peat N."/>
            <person name="Hayles J."/>
            <person name="Baker S.G."/>
            <person name="Basham D."/>
            <person name="Bowman S."/>
            <person name="Brooks K."/>
            <person name="Brown D."/>
            <person name="Brown S."/>
            <person name="Chillingworth T."/>
            <person name="Churcher C.M."/>
            <person name="Collins M."/>
            <person name="Connor R."/>
            <person name="Cronin A."/>
            <person name="Davis P."/>
            <person name="Feltwell T."/>
            <person name="Fraser A."/>
            <person name="Gentles S."/>
            <person name="Goble A."/>
            <person name="Hamlin N."/>
            <person name="Harris D.E."/>
            <person name="Hidalgo J."/>
            <person name="Hodgson G."/>
            <person name="Holroyd S."/>
            <person name="Hornsby T."/>
            <person name="Howarth S."/>
            <person name="Huckle E.J."/>
            <person name="Hunt S."/>
            <person name="Jagels K."/>
            <person name="James K.D."/>
            <person name="Jones L."/>
            <person name="Jones M."/>
            <person name="Leather S."/>
            <person name="McDonald S."/>
            <person name="McLean J."/>
            <person name="Mooney P."/>
            <person name="Moule S."/>
            <person name="Mungall K.L."/>
            <person name="Murphy L.D."/>
            <person name="Niblett D."/>
            <person name="Odell C."/>
            <person name="Oliver K."/>
            <person name="O'Neil S."/>
            <person name="Pearson D."/>
            <person name="Quail M.A."/>
            <person name="Rabbinowitsch E."/>
            <person name="Rutherford K.M."/>
            <person name="Rutter S."/>
            <person name="Saunders D."/>
            <person name="Seeger K."/>
            <person name="Sharp S."/>
            <person name="Skelton J."/>
            <person name="Simmonds M.N."/>
            <person name="Squares R."/>
            <person name="Squares S."/>
            <person name="Stevens K."/>
            <person name="Taylor K."/>
            <person name="Taylor R.G."/>
            <person name="Tivey A."/>
            <person name="Walsh S.V."/>
            <person name="Warren T."/>
            <person name="Whitehead S."/>
            <person name="Woodward J.R."/>
            <person name="Volckaert G."/>
            <person name="Aert R."/>
            <person name="Robben J."/>
            <person name="Grymonprez B."/>
            <person name="Weltjens I."/>
            <person name="Vanstreels E."/>
            <person name="Rieger M."/>
            <person name="Schaefer M."/>
            <person name="Mueller-Auer S."/>
            <person name="Gabel C."/>
            <person name="Fuchs M."/>
            <person name="Duesterhoeft A."/>
            <person name="Fritzc C."/>
            <person name="Holzer E."/>
            <person name="Moestl D."/>
            <person name="Hilbert H."/>
            <person name="Borzym K."/>
            <person name="Langer I."/>
            <person name="Beck A."/>
            <person name="Lehrach H."/>
            <person name="Reinhardt R."/>
            <person name="Pohl T.M."/>
            <person name="Eger P."/>
            <person name="Zimmermann W."/>
            <person name="Wedler H."/>
            <person name="Wambutt R."/>
            <person name="Purnelle B."/>
            <person name="Goffeau A."/>
            <person name="Cadieu E."/>
            <person name="Dreano S."/>
            <person name="Gloux S."/>
            <person name="Lelaure V."/>
            <person name="Mottier S."/>
            <person name="Galibert F."/>
            <person name="Aves S.J."/>
            <person name="Xiang Z."/>
            <person name="Hunt C."/>
            <person name="Moore K."/>
            <person name="Hurst S.M."/>
            <person name="Lucas M."/>
            <person name="Rochet M."/>
            <person name="Gaillardin C."/>
            <person name="Tallada V.A."/>
            <person name="Garzon A."/>
            <person name="Thode G."/>
            <person name="Daga R.R."/>
            <person name="Cruzado L."/>
            <person name="Jimenez J."/>
            <person name="Sanchez M."/>
            <person name="del Rey F."/>
            <person name="Benito J."/>
            <person name="Dominguez A."/>
            <person name="Revuelta J.L."/>
            <person name="Moreno S."/>
            <person name="Armstrong J."/>
            <person name="Forsburg S.L."/>
            <person name="Cerutti L."/>
            <person name="Lowe T."/>
            <person name="McCombie W.R."/>
            <person name="Paulsen I."/>
            <person name="Potashkin J."/>
            <person name="Shpakovski G.V."/>
            <person name="Ussery D."/>
            <person name="Barrell B.G."/>
            <person name="Nurse P."/>
        </authorList>
    </citation>
    <scope>NUCLEOTIDE SEQUENCE [LARGE SCALE GENOMIC DNA]</scope>
    <source>
        <strain>972 / ATCC 24843</strain>
    </source>
</reference>
<accession>Q8TFF8</accession>
<name>ASPG4_SCHPO</name>
<dbReference type="EC" id="3.5.1.1"/>
<dbReference type="EMBL" id="CU329671">
    <property type="protein sequence ID" value="CAD27911.1"/>
    <property type="molecule type" value="Genomic_DNA"/>
</dbReference>
<dbReference type="RefSeq" id="NP_001018766.1">
    <property type="nucleotide sequence ID" value="NM_001020941.2"/>
</dbReference>
<dbReference type="SMR" id="Q8TFF8"/>
<dbReference type="FunCoup" id="Q8TFF8">
    <property type="interactions" value="34"/>
</dbReference>
<dbReference type="STRING" id="284812.Q8TFF8"/>
<dbReference type="iPTMnet" id="Q8TFF8"/>
<dbReference type="PaxDb" id="4896-SPBPB8B6.05c.1"/>
<dbReference type="EnsemblFungi" id="SPBPB8B6.05c.1">
    <property type="protein sequence ID" value="SPBPB8B6.05c.1:pep"/>
    <property type="gene ID" value="SPBPB8B6.05c"/>
</dbReference>
<dbReference type="KEGG" id="spo:3361187"/>
<dbReference type="PomBase" id="SPBPB8B6.05c"/>
<dbReference type="VEuPathDB" id="FungiDB:SPBPB8B6.05c"/>
<dbReference type="eggNOG" id="KOG0503">
    <property type="taxonomic scope" value="Eukaryota"/>
</dbReference>
<dbReference type="HOGENOM" id="CLU_019134_1_2_1"/>
<dbReference type="InParanoid" id="Q8TFF8"/>
<dbReference type="PhylomeDB" id="Q8TFF8"/>
<dbReference type="PRO" id="PR:Q8TFF8"/>
<dbReference type="Proteomes" id="UP000002485">
    <property type="component" value="Chromosome II"/>
</dbReference>
<dbReference type="GO" id="GO:0009986">
    <property type="term" value="C:cell surface"/>
    <property type="evidence" value="ECO:0000303"/>
    <property type="project" value="PomBase"/>
</dbReference>
<dbReference type="GO" id="GO:0005737">
    <property type="term" value="C:cytoplasm"/>
    <property type="evidence" value="ECO:0007005"/>
    <property type="project" value="PomBase"/>
</dbReference>
<dbReference type="GO" id="GO:0005576">
    <property type="term" value="C:extracellular region"/>
    <property type="evidence" value="ECO:0007669"/>
    <property type="project" value="UniProtKB-KW"/>
</dbReference>
<dbReference type="GO" id="GO:0042597">
    <property type="term" value="C:periplasmic space"/>
    <property type="evidence" value="ECO:0000318"/>
    <property type="project" value="GO_Central"/>
</dbReference>
<dbReference type="GO" id="GO:0004067">
    <property type="term" value="F:asparaginase activity"/>
    <property type="evidence" value="ECO:0000318"/>
    <property type="project" value="GO_Central"/>
</dbReference>
<dbReference type="GO" id="GO:0006530">
    <property type="term" value="P:asparagine catabolic process"/>
    <property type="evidence" value="ECO:0000318"/>
    <property type="project" value="GO_Central"/>
</dbReference>
<dbReference type="CDD" id="cd08964">
    <property type="entry name" value="L-asparaginase_II"/>
    <property type="match status" value="1"/>
</dbReference>
<dbReference type="FunFam" id="3.40.50.1170:FF:000001">
    <property type="entry name" value="L-asparaginase 2"/>
    <property type="match status" value="1"/>
</dbReference>
<dbReference type="Gene3D" id="3.40.50.40">
    <property type="match status" value="1"/>
</dbReference>
<dbReference type="Gene3D" id="3.40.50.1170">
    <property type="entry name" value="L-asparaginase, N-terminal domain"/>
    <property type="match status" value="1"/>
</dbReference>
<dbReference type="InterPro" id="IPR004550">
    <property type="entry name" value="AsnASE_II"/>
</dbReference>
<dbReference type="InterPro" id="IPR036152">
    <property type="entry name" value="Asp/glu_Ase-like_sf"/>
</dbReference>
<dbReference type="InterPro" id="IPR006034">
    <property type="entry name" value="Asparaginase/glutaminase-like"/>
</dbReference>
<dbReference type="InterPro" id="IPR040919">
    <property type="entry name" value="Asparaginase_C"/>
</dbReference>
<dbReference type="InterPro" id="IPR027473">
    <property type="entry name" value="L-asparaginase_C"/>
</dbReference>
<dbReference type="InterPro" id="IPR027474">
    <property type="entry name" value="L-asparaginase_N"/>
</dbReference>
<dbReference type="InterPro" id="IPR037152">
    <property type="entry name" value="L-asparaginase_N_sf"/>
</dbReference>
<dbReference type="NCBIfam" id="TIGR00520">
    <property type="entry name" value="asnASE_II"/>
    <property type="match status" value="1"/>
</dbReference>
<dbReference type="PANTHER" id="PTHR11707:SF28">
    <property type="entry name" value="60 KDA LYSOPHOSPHOLIPASE"/>
    <property type="match status" value="1"/>
</dbReference>
<dbReference type="PANTHER" id="PTHR11707">
    <property type="entry name" value="L-ASPARAGINASE"/>
    <property type="match status" value="1"/>
</dbReference>
<dbReference type="Pfam" id="PF00710">
    <property type="entry name" value="Asparaginase"/>
    <property type="match status" value="1"/>
</dbReference>
<dbReference type="Pfam" id="PF17763">
    <property type="entry name" value="Asparaginase_C"/>
    <property type="match status" value="1"/>
</dbReference>
<dbReference type="PIRSF" id="PIRSF001220">
    <property type="entry name" value="L-ASNase_gatD"/>
    <property type="match status" value="1"/>
</dbReference>
<dbReference type="PIRSF" id="PIRSF500176">
    <property type="entry name" value="L_ASNase"/>
    <property type="match status" value="1"/>
</dbReference>
<dbReference type="PRINTS" id="PR00139">
    <property type="entry name" value="ASNGLNASE"/>
</dbReference>
<dbReference type="SMART" id="SM00870">
    <property type="entry name" value="Asparaginase"/>
    <property type="match status" value="1"/>
</dbReference>
<dbReference type="SUPFAM" id="SSF53774">
    <property type="entry name" value="Glutaminase/Asparaginase"/>
    <property type="match status" value="1"/>
</dbReference>
<dbReference type="PROSITE" id="PS51732">
    <property type="entry name" value="ASN_GLN_ASE_3"/>
    <property type="match status" value="1"/>
</dbReference>
<protein>
    <recommendedName>
        <fullName>Probable L-asparaginase 4</fullName>
        <ecNumber>3.5.1.1</ecNumber>
    </recommendedName>
    <alternativeName>
        <fullName>L-asparagine amidohydrolase 4</fullName>
    </alternativeName>
</protein>
<gene>
    <name type="ORF">SPAP8B6.05c</name>
    <name type="ORF">SPBPB8B6.05c</name>
</gene>
<evidence type="ECO:0000250" key="1"/>
<evidence type="ECO:0000255" key="2"/>
<evidence type="ECO:0000255" key="3">
    <source>
        <dbReference type="PROSITE-ProRule" id="PRU01068"/>
    </source>
</evidence>
<evidence type="ECO:0000305" key="4"/>
<keyword id="KW-0134">Cell wall</keyword>
<keyword id="KW-0325">Glycoprotein</keyword>
<keyword id="KW-0378">Hydrolase</keyword>
<keyword id="KW-1185">Reference proteome</keyword>
<keyword id="KW-0964">Secreted</keyword>
<keyword id="KW-0732">Signal</keyword>
<feature type="signal peptide" evidence="2">
    <location>
        <begin position="1"/>
        <end position="22"/>
    </location>
</feature>
<feature type="chain" id="PRO_0000002366" description="Probable L-asparaginase 4">
    <location>
        <begin position="23"/>
        <end position="356"/>
    </location>
</feature>
<feature type="domain" description="Asparaginase/glutaminase" evidence="3">
    <location>
        <begin position="36"/>
        <end position="356"/>
    </location>
</feature>
<feature type="active site" description="O-isoaspartyl threonine intermediate" evidence="1">
    <location>
        <position position="46"/>
    </location>
</feature>
<feature type="binding site" evidence="1">
    <location>
        <position position="93"/>
    </location>
    <ligand>
        <name>substrate</name>
    </ligand>
</feature>
<feature type="binding site" evidence="1">
    <location>
        <begin position="126"/>
        <end position="127"/>
    </location>
    <ligand>
        <name>substrate</name>
    </ligand>
</feature>
<feature type="glycosylation site" description="N-linked (GlcNAc...) asparagine" evidence="2">
    <location>
        <position position="37"/>
    </location>
</feature>
<feature type="glycosylation site" description="N-linked (GlcNAc...) asparagine" evidence="2">
    <location>
        <position position="52"/>
    </location>
</feature>
<feature type="glycosylation site" description="N-linked (GlcNAc...) asparagine" evidence="2">
    <location>
        <position position="176"/>
    </location>
</feature>
<sequence>MWGFIVTCGIFLVLLCQLRLLSKRKSKSTPYNALLPNVTVFAMGGTIAGCANSSLEIVNYIPGSVGIEKLIEAVPAIKAIANINGVQVTNMGSENLTPADVLKLAKLILAEVAKPNVHGIVITHGTDSLEETAMFLDLTISTAKPIVVVGAMRPSTAIGADGPMNLLNAVAVASSNQSMGRGTLVLLNDRIGSAFYTTKTNGNTLDTFKSYEAGSLGIVLNQKPFYFFSPAVPTGKVFFDIYNIKQLPRVDILYGYQGLNPKLAESAVHLGAKGLVLAAMGATSWTDDGNEVISSLIREHNIPVVYSHRTAEGYSSNSCLGIPSYFLNPQKARYMLMLAISSGYSIRDIEGLFSIK</sequence>
<organism>
    <name type="scientific">Schizosaccharomyces pombe (strain 972 / ATCC 24843)</name>
    <name type="common">Fission yeast</name>
    <dbReference type="NCBI Taxonomy" id="284812"/>
    <lineage>
        <taxon>Eukaryota</taxon>
        <taxon>Fungi</taxon>
        <taxon>Dikarya</taxon>
        <taxon>Ascomycota</taxon>
        <taxon>Taphrinomycotina</taxon>
        <taxon>Schizosaccharomycetes</taxon>
        <taxon>Schizosaccharomycetales</taxon>
        <taxon>Schizosaccharomycetaceae</taxon>
        <taxon>Schizosaccharomyces</taxon>
    </lineage>
</organism>